<feature type="chain" id="PRO_1000124958" description="Nucleoside diphosphate kinase">
    <location>
        <begin position="1"/>
        <end position="143"/>
    </location>
</feature>
<feature type="active site" description="Pros-phosphohistidine intermediate" evidence="1">
    <location>
        <position position="117"/>
    </location>
</feature>
<feature type="binding site" evidence="1">
    <location>
        <position position="11"/>
    </location>
    <ligand>
        <name>ATP</name>
        <dbReference type="ChEBI" id="CHEBI:30616"/>
    </ligand>
</feature>
<feature type="binding site" evidence="1">
    <location>
        <position position="59"/>
    </location>
    <ligand>
        <name>ATP</name>
        <dbReference type="ChEBI" id="CHEBI:30616"/>
    </ligand>
</feature>
<feature type="binding site" evidence="1">
    <location>
        <position position="87"/>
    </location>
    <ligand>
        <name>ATP</name>
        <dbReference type="ChEBI" id="CHEBI:30616"/>
    </ligand>
</feature>
<feature type="binding site" evidence="1">
    <location>
        <position position="93"/>
    </location>
    <ligand>
        <name>ATP</name>
        <dbReference type="ChEBI" id="CHEBI:30616"/>
    </ligand>
</feature>
<feature type="binding site" evidence="1">
    <location>
        <position position="104"/>
    </location>
    <ligand>
        <name>ATP</name>
        <dbReference type="ChEBI" id="CHEBI:30616"/>
    </ligand>
</feature>
<feature type="binding site" evidence="1">
    <location>
        <position position="114"/>
    </location>
    <ligand>
        <name>ATP</name>
        <dbReference type="ChEBI" id="CHEBI:30616"/>
    </ligand>
</feature>
<name>NDK_ECO7I</name>
<dbReference type="EC" id="2.7.4.6" evidence="1"/>
<dbReference type="EMBL" id="CU928164">
    <property type="protein sequence ID" value="CAR18842.1"/>
    <property type="molecule type" value="Genomic_DNA"/>
</dbReference>
<dbReference type="RefSeq" id="WP_000963841.1">
    <property type="nucleotide sequence ID" value="NC_011750.1"/>
</dbReference>
<dbReference type="RefSeq" id="YP_002408657.1">
    <property type="nucleotide sequence ID" value="NC_011750.1"/>
</dbReference>
<dbReference type="SMR" id="B7NRG8"/>
<dbReference type="STRING" id="585057.ECIAI39_2719"/>
<dbReference type="GeneID" id="86947407"/>
<dbReference type="KEGG" id="ect:ECIAI39_2719"/>
<dbReference type="PATRIC" id="fig|585057.6.peg.2827"/>
<dbReference type="HOGENOM" id="CLU_060216_8_1_6"/>
<dbReference type="Proteomes" id="UP000000749">
    <property type="component" value="Chromosome"/>
</dbReference>
<dbReference type="GO" id="GO:0005737">
    <property type="term" value="C:cytoplasm"/>
    <property type="evidence" value="ECO:0007669"/>
    <property type="project" value="UniProtKB-SubCell"/>
</dbReference>
<dbReference type="GO" id="GO:0005524">
    <property type="term" value="F:ATP binding"/>
    <property type="evidence" value="ECO:0007669"/>
    <property type="project" value="UniProtKB-UniRule"/>
</dbReference>
<dbReference type="GO" id="GO:0046872">
    <property type="term" value="F:metal ion binding"/>
    <property type="evidence" value="ECO:0007669"/>
    <property type="project" value="UniProtKB-KW"/>
</dbReference>
<dbReference type="GO" id="GO:0004550">
    <property type="term" value="F:nucleoside diphosphate kinase activity"/>
    <property type="evidence" value="ECO:0007669"/>
    <property type="project" value="UniProtKB-UniRule"/>
</dbReference>
<dbReference type="GO" id="GO:0006241">
    <property type="term" value="P:CTP biosynthetic process"/>
    <property type="evidence" value="ECO:0007669"/>
    <property type="project" value="UniProtKB-UniRule"/>
</dbReference>
<dbReference type="GO" id="GO:0006183">
    <property type="term" value="P:GTP biosynthetic process"/>
    <property type="evidence" value="ECO:0007669"/>
    <property type="project" value="UniProtKB-UniRule"/>
</dbReference>
<dbReference type="GO" id="GO:0006228">
    <property type="term" value="P:UTP biosynthetic process"/>
    <property type="evidence" value="ECO:0007669"/>
    <property type="project" value="UniProtKB-UniRule"/>
</dbReference>
<dbReference type="CDD" id="cd04413">
    <property type="entry name" value="NDPk_I"/>
    <property type="match status" value="1"/>
</dbReference>
<dbReference type="FunFam" id="3.30.70.141:FF:000001">
    <property type="entry name" value="Nucleoside diphosphate kinase"/>
    <property type="match status" value="1"/>
</dbReference>
<dbReference type="Gene3D" id="3.30.70.141">
    <property type="entry name" value="Nucleoside diphosphate kinase-like domain"/>
    <property type="match status" value="1"/>
</dbReference>
<dbReference type="HAMAP" id="MF_00451">
    <property type="entry name" value="NDP_kinase"/>
    <property type="match status" value="1"/>
</dbReference>
<dbReference type="InterPro" id="IPR034907">
    <property type="entry name" value="NDK-like_dom"/>
</dbReference>
<dbReference type="InterPro" id="IPR036850">
    <property type="entry name" value="NDK-like_dom_sf"/>
</dbReference>
<dbReference type="InterPro" id="IPR001564">
    <property type="entry name" value="Nucleoside_diP_kinase"/>
</dbReference>
<dbReference type="InterPro" id="IPR023005">
    <property type="entry name" value="Nucleoside_diP_kinase_AS"/>
</dbReference>
<dbReference type="NCBIfam" id="NF001908">
    <property type="entry name" value="PRK00668.1"/>
    <property type="match status" value="1"/>
</dbReference>
<dbReference type="PANTHER" id="PTHR46161">
    <property type="entry name" value="NUCLEOSIDE DIPHOSPHATE KINASE"/>
    <property type="match status" value="1"/>
</dbReference>
<dbReference type="PANTHER" id="PTHR46161:SF3">
    <property type="entry name" value="NUCLEOSIDE DIPHOSPHATE KINASE DDB_G0292928-RELATED"/>
    <property type="match status" value="1"/>
</dbReference>
<dbReference type="Pfam" id="PF00334">
    <property type="entry name" value="NDK"/>
    <property type="match status" value="1"/>
</dbReference>
<dbReference type="PRINTS" id="PR01243">
    <property type="entry name" value="NUCDPKINASE"/>
</dbReference>
<dbReference type="SMART" id="SM00562">
    <property type="entry name" value="NDK"/>
    <property type="match status" value="1"/>
</dbReference>
<dbReference type="SUPFAM" id="SSF54919">
    <property type="entry name" value="Nucleoside diphosphate kinase, NDK"/>
    <property type="match status" value="1"/>
</dbReference>
<dbReference type="PROSITE" id="PS00469">
    <property type="entry name" value="NDPK"/>
    <property type="match status" value="1"/>
</dbReference>
<dbReference type="PROSITE" id="PS51374">
    <property type="entry name" value="NDPK_LIKE"/>
    <property type="match status" value="1"/>
</dbReference>
<sequence length="143" mass="15436">MAIERTFSIIKPNAVAKNVIGSIFARFEAAGFKIVGTKMLHLTVEQARGFYAEHDGKPFFDGLVEFMTSGPIVVSVLEGENAVQRHRDLLGATNPANALAGTLRADYADSLTENGTHGSDSVESAAREIAYFFGEGEVCPRTR</sequence>
<accession>B7NRG8</accession>
<keyword id="KW-0067">ATP-binding</keyword>
<keyword id="KW-0963">Cytoplasm</keyword>
<keyword id="KW-0418">Kinase</keyword>
<keyword id="KW-0460">Magnesium</keyword>
<keyword id="KW-0479">Metal-binding</keyword>
<keyword id="KW-0546">Nucleotide metabolism</keyword>
<keyword id="KW-0547">Nucleotide-binding</keyword>
<keyword id="KW-0597">Phosphoprotein</keyword>
<keyword id="KW-0808">Transferase</keyword>
<comment type="function">
    <text evidence="1">Major role in the synthesis of nucleoside triphosphates other than ATP. The ATP gamma phosphate is transferred to the NDP beta phosphate via a ping-pong mechanism, using a phosphorylated active-site intermediate.</text>
</comment>
<comment type="catalytic activity">
    <reaction evidence="1">
        <text>a 2'-deoxyribonucleoside 5'-diphosphate + ATP = a 2'-deoxyribonucleoside 5'-triphosphate + ADP</text>
        <dbReference type="Rhea" id="RHEA:44640"/>
        <dbReference type="ChEBI" id="CHEBI:30616"/>
        <dbReference type="ChEBI" id="CHEBI:61560"/>
        <dbReference type="ChEBI" id="CHEBI:73316"/>
        <dbReference type="ChEBI" id="CHEBI:456216"/>
        <dbReference type="EC" id="2.7.4.6"/>
    </reaction>
</comment>
<comment type="catalytic activity">
    <reaction evidence="1">
        <text>a ribonucleoside 5'-diphosphate + ATP = a ribonucleoside 5'-triphosphate + ADP</text>
        <dbReference type="Rhea" id="RHEA:18113"/>
        <dbReference type="ChEBI" id="CHEBI:30616"/>
        <dbReference type="ChEBI" id="CHEBI:57930"/>
        <dbReference type="ChEBI" id="CHEBI:61557"/>
        <dbReference type="ChEBI" id="CHEBI:456216"/>
        <dbReference type="EC" id="2.7.4.6"/>
    </reaction>
</comment>
<comment type="cofactor">
    <cofactor evidence="1">
        <name>Mg(2+)</name>
        <dbReference type="ChEBI" id="CHEBI:18420"/>
    </cofactor>
</comment>
<comment type="subunit">
    <text evidence="1">Homotetramer.</text>
</comment>
<comment type="subcellular location">
    <subcellularLocation>
        <location evidence="1">Cytoplasm</location>
    </subcellularLocation>
</comment>
<comment type="similarity">
    <text evidence="1">Belongs to the NDK family.</text>
</comment>
<protein>
    <recommendedName>
        <fullName evidence="1">Nucleoside diphosphate kinase</fullName>
        <shortName evidence="1">NDK</shortName>
        <shortName evidence="1">NDP kinase</shortName>
        <ecNumber evidence="1">2.7.4.6</ecNumber>
    </recommendedName>
    <alternativeName>
        <fullName evidence="1">Nucleoside-2-P kinase</fullName>
    </alternativeName>
</protein>
<proteinExistence type="inferred from homology"/>
<gene>
    <name evidence="1" type="primary">ndk</name>
    <name type="ordered locus">ECIAI39_2719</name>
</gene>
<reference key="1">
    <citation type="journal article" date="2009" name="PLoS Genet.">
        <title>Organised genome dynamics in the Escherichia coli species results in highly diverse adaptive paths.</title>
        <authorList>
            <person name="Touchon M."/>
            <person name="Hoede C."/>
            <person name="Tenaillon O."/>
            <person name="Barbe V."/>
            <person name="Baeriswyl S."/>
            <person name="Bidet P."/>
            <person name="Bingen E."/>
            <person name="Bonacorsi S."/>
            <person name="Bouchier C."/>
            <person name="Bouvet O."/>
            <person name="Calteau A."/>
            <person name="Chiapello H."/>
            <person name="Clermont O."/>
            <person name="Cruveiller S."/>
            <person name="Danchin A."/>
            <person name="Diard M."/>
            <person name="Dossat C."/>
            <person name="Karoui M.E."/>
            <person name="Frapy E."/>
            <person name="Garry L."/>
            <person name="Ghigo J.M."/>
            <person name="Gilles A.M."/>
            <person name="Johnson J."/>
            <person name="Le Bouguenec C."/>
            <person name="Lescat M."/>
            <person name="Mangenot S."/>
            <person name="Martinez-Jehanne V."/>
            <person name="Matic I."/>
            <person name="Nassif X."/>
            <person name="Oztas S."/>
            <person name="Petit M.A."/>
            <person name="Pichon C."/>
            <person name="Rouy Z."/>
            <person name="Ruf C.S."/>
            <person name="Schneider D."/>
            <person name="Tourret J."/>
            <person name="Vacherie B."/>
            <person name="Vallenet D."/>
            <person name="Medigue C."/>
            <person name="Rocha E.P.C."/>
            <person name="Denamur E."/>
        </authorList>
    </citation>
    <scope>NUCLEOTIDE SEQUENCE [LARGE SCALE GENOMIC DNA]</scope>
    <source>
        <strain>IAI39 / ExPEC</strain>
    </source>
</reference>
<evidence type="ECO:0000255" key="1">
    <source>
        <dbReference type="HAMAP-Rule" id="MF_00451"/>
    </source>
</evidence>
<organism>
    <name type="scientific">Escherichia coli O7:K1 (strain IAI39 / ExPEC)</name>
    <dbReference type="NCBI Taxonomy" id="585057"/>
    <lineage>
        <taxon>Bacteria</taxon>
        <taxon>Pseudomonadati</taxon>
        <taxon>Pseudomonadota</taxon>
        <taxon>Gammaproteobacteria</taxon>
        <taxon>Enterobacterales</taxon>
        <taxon>Enterobacteriaceae</taxon>
        <taxon>Escherichia</taxon>
    </lineage>
</organism>